<evidence type="ECO:0000250" key="1"/>
<evidence type="ECO:0000255" key="2"/>
<evidence type="ECO:0000256" key="3">
    <source>
        <dbReference type="SAM" id="MobiDB-lite"/>
    </source>
</evidence>
<evidence type="ECO:0000305" key="4"/>
<feature type="chain" id="PRO_0000118984" description="Exocyst complex component exo84">
    <location>
        <begin position="1"/>
        <end position="683"/>
    </location>
</feature>
<feature type="region of interest" description="Disordered" evidence="3">
    <location>
        <begin position="1"/>
        <end position="91"/>
    </location>
</feature>
<feature type="region of interest" description="Disordered" evidence="3">
    <location>
        <begin position="103"/>
        <end position="125"/>
    </location>
</feature>
<feature type="region of interest" description="Disordered" evidence="3">
    <location>
        <begin position="217"/>
        <end position="242"/>
    </location>
</feature>
<feature type="coiled-coil region" evidence="2">
    <location>
        <begin position="145"/>
        <end position="213"/>
    </location>
</feature>
<feature type="coiled-coil region" evidence="2">
    <location>
        <begin position="388"/>
        <end position="422"/>
    </location>
</feature>
<feature type="compositionally biased region" description="Low complexity" evidence="3">
    <location>
        <begin position="219"/>
        <end position="228"/>
    </location>
</feature>
<sequence>MSEERSKISLRSGGKRKNRPTISAPRQISAPIPQDNGMPQPPPEATMADEPRMTRPRPPPPGGKTSDLVKKRYSTRFGNMPTDFDPSSNPMPALPDLEKYMQAQVGSPPSRGGDAGGLGPMGREPPRVDIRTLRDPNFAPEQYVAEVLGEATEDEIRDYEDALKQLKARAAADLQQNVYQNRTQFIKISKEAEKLKGEMRTLRNLMLELKTNTTALRASSNSADSSGSLGPEFSTGLSKRDRRSSITDRTALWSAQMQALYKSVEGSQKFLPNSQGRHVVQNAGPWIELDNATYKSRRSMQIFLLNDHLLIASRKKRKIDGPGADARGPMTKLVADRCWHLLDVEVVDMAGTGDSSNGRNKLADAIMVRGGGQNESFIYRTEKPEDPEKTTLILNIRKTVEELRRNLQSERDATNKAKETINYFASRDPGLLQKTELLETLSDIKDMLIEVDGKQQNLRWVESQMDELDINIALQQIEPAVARIEMLKNLASGLKNNMIAQDFISFKVDERCARLATLVVRELVNSHNDQKKTKRNVTWLVRLGFEDRAREAYLEARSEVIQKRSRQCIFQGDLHLYIWEISFVYFMVIRNTVICFQSCFPPPMMSACVKWAKEEVDAFNVILARQLSSAEEGGEVWTECVNRAKEHASMLSDVGLDFRNLVGRNVGTSTTVPGGASAGLGLS</sequence>
<organism>
    <name type="scientific">Neurospora crassa (strain ATCC 24698 / 74-OR23-1A / CBS 708.71 / DSM 1257 / FGSC 987)</name>
    <dbReference type="NCBI Taxonomy" id="367110"/>
    <lineage>
        <taxon>Eukaryota</taxon>
        <taxon>Fungi</taxon>
        <taxon>Dikarya</taxon>
        <taxon>Ascomycota</taxon>
        <taxon>Pezizomycotina</taxon>
        <taxon>Sordariomycetes</taxon>
        <taxon>Sordariomycetidae</taxon>
        <taxon>Sordariales</taxon>
        <taxon>Sordariaceae</taxon>
        <taxon>Neurospora</taxon>
    </lineage>
</organism>
<reference key="1">
    <citation type="journal article" date="2003" name="Nature">
        <title>The genome sequence of the filamentous fungus Neurospora crassa.</title>
        <authorList>
            <person name="Galagan J.E."/>
            <person name="Calvo S.E."/>
            <person name="Borkovich K.A."/>
            <person name="Selker E.U."/>
            <person name="Read N.D."/>
            <person name="Jaffe D.B."/>
            <person name="FitzHugh W."/>
            <person name="Ma L.-J."/>
            <person name="Smirnov S."/>
            <person name="Purcell S."/>
            <person name="Rehman B."/>
            <person name="Elkins T."/>
            <person name="Engels R."/>
            <person name="Wang S."/>
            <person name="Nielsen C.B."/>
            <person name="Butler J."/>
            <person name="Endrizzi M."/>
            <person name="Qui D."/>
            <person name="Ianakiev P."/>
            <person name="Bell-Pedersen D."/>
            <person name="Nelson M.A."/>
            <person name="Werner-Washburne M."/>
            <person name="Selitrennikoff C.P."/>
            <person name="Kinsey J.A."/>
            <person name="Braun E.L."/>
            <person name="Zelter A."/>
            <person name="Schulte U."/>
            <person name="Kothe G.O."/>
            <person name="Jedd G."/>
            <person name="Mewes H.-W."/>
            <person name="Staben C."/>
            <person name="Marcotte E."/>
            <person name="Greenberg D."/>
            <person name="Roy A."/>
            <person name="Foley K."/>
            <person name="Naylor J."/>
            <person name="Stange-Thomann N."/>
            <person name="Barrett R."/>
            <person name="Gnerre S."/>
            <person name="Kamal M."/>
            <person name="Kamvysselis M."/>
            <person name="Mauceli E.W."/>
            <person name="Bielke C."/>
            <person name="Rudd S."/>
            <person name="Frishman D."/>
            <person name="Krystofova S."/>
            <person name="Rasmussen C."/>
            <person name="Metzenberg R.L."/>
            <person name="Perkins D.D."/>
            <person name="Kroken S."/>
            <person name="Cogoni C."/>
            <person name="Macino G."/>
            <person name="Catcheside D.E.A."/>
            <person name="Li W."/>
            <person name="Pratt R.J."/>
            <person name="Osmani S.A."/>
            <person name="DeSouza C.P.C."/>
            <person name="Glass N.L."/>
            <person name="Orbach M.J."/>
            <person name="Berglund J.A."/>
            <person name="Voelker R."/>
            <person name="Yarden O."/>
            <person name="Plamann M."/>
            <person name="Seiler S."/>
            <person name="Dunlap J.C."/>
            <person name="Radford A."/>
            <person name="Aramayo R."/>
            <person name="Natvig D.O."/>
            <person name="Alex L.A."/>
            <person name="Mannhaupt G."/>
            <person name="Ebbole D.J."/>
            <person name="Freitag M."/>
            <person name="Paulsen I."/>
            <person name="Sachs M.S."/>
            <person name="Lander E.S."/>
            <person name="Nusbaum C."/>
            <person name="Birren B.W."/>
        </authorList>
    </citation>
    <scope>NUCLEOTIDE SEQUENCE [LARGE SCALE GENOMIC DNA]</scope>
    <source>
        <strain>ATCC 24698 / 74-OR23-1A / CBS 708.71 / DSM 1257 / FGSC 987</strain>
    </source>
</reference>
<comment type="function">
    <text evidence="1">Involved in the secretory pathway as part of the exocyst complex which tethers secretory vesicles to the sites of exocytosis. Plays a role in both the assembly of the exocyst and the polarization of this complex to specific sites of the plasma membrane for exocytosis. Also involved in assembly of the spliceosome (By similarity).</text>
</comment>
<comment type="subunit">
    <text evidence="1">Component of the exocyst complex.</text>
</comment>
<comment type="subcellular location">
    <subcellularLocation>
        <location evidence="1">Cytoplasmic vesicle</location>
        <location evidence="1">Secretory vesicle</location>
    </subcellularLocation>
    <text evidence="1">Cell periphery. The polarization of exo84 requires actin cables (By similarity).</text>
</comment>
<comment type="similarity">
    <text evidence="4">Belongs to the EXO84 family.</text>
</comment>
<proteinExistence type="inferred from homology"/>
<dbReference type="EMBL" id="CM002239">
    <property type="protein sequence ID" value="EAA32583.3"/>
    <property type="molecule type" value="Genomic_DNA"/>
</dbReference>
<dbReference type="RefSeq" id="XP_961819.3">
    <property type="nucleotide sequence ID" value="XM_956726.3"/>
</dbReference>
<dbReference type="SMR" id="Q7S8B6"/>
<dbReference type="FunCoup" id="Q7S8B6">
    <property type="interactions" value="167"/>
</dbReference>
<dbReference type="STRING" id="367110.Q7S8B6"/>
<dbReference type="PaxDb" id="5141-EFNCRP00000006340"/>
<dbReference type="EnsemblFungi" id="EAA32583">
    <property type="protein sequence ID" value="EAA32583"/>
    <property type="gene ID" value="NCU06631"/>
</dbReference>
<dbReference type="GeneID" id="3877967"/>
<dbReference type="KEGG" id="ncr:NCU06631"/>
<dbReference type="VEuPathDB" id="FungiDB:NCU06631"/>
<dbReference type="HOGENOM" id="CLU_012488_2_0_1"/>
<dbReference type="InParanoid" id="Q7S8B6"/>
<dbReference type="OrthoDB" id="642193at2759"/>
<dbReference type="Proteomes" id="UP000001805">
    <property type="component" value="Chromosome 4, Linkage Group IV"/>
</dbReference>
<dbReference type="GO" id="GO:0000145">
    <property type="term" value="C:exocyst"/>
    <property type="evidence" value="ECO:0000318"/>
    <property type="project" value="GO_Central"/>
</dbReference>
<dbReference type="GO" id="GO:0030133">
    <property type="term" value="C:transport vesicle"/>
    <property type="evidence" value="ECO:0007669"/>
    <property type="project" value="UniProtKB-SubCell"/>
</dbReference>
<dbReference type="GO" id="GO:0006887">
    <property type="term" value="P:exocytosis"/>
    <property type="evidence" value="ECO:0007669"/>
    <property type="project" value="UniProtKB-KW"/>
</dbReference>
<dbReference type="GO" id="GO:0006893">
    <property type="term" value="P:Golgi to plasma membrane transport"/>
    <property type="evidence" value="ECO:0000318"/>
    <property type="project" value="GO_Central"/>
</dbReference>
<dbReference type="GO" id="GO:0008104">
    <property type="term" value="P:protein localization"/>
    <property type="evidence" value="ECO:0000318"/>
    <property type="project" value="GO_Central"/>
</dbReference>
<dbReference type="GO" id="GO:0015031">
    <property type="term" value="P:protein transport"/>
    <property type="evidence" value="ECO:0007669"/>
    <property type="project" value="UniProtKB-KW"/>
</dbReference>
<dbReference type="FunFam" id="1.20.58.1210:FF:000003">
    <property type="entry name" value="Exocyst complex component EXO84"/>
    <property type="match status" value="1"/>
</dbReference>
<dbReference type="FunFam" id="2.30.29.30:FF:000264">
    <property type="entry name" value="Potential exocyst complex component Exo84"/>
    <property type="match status" value="1"/>
</dbReference>
<dbReference type="Gene3D" id="1.20.58.1220">
    <property type="entry name" value="Exo84p, C-terminal helical domain"/>
    <property type="match status" value="1"/>
</dbReference>
<dbReference type="Gene3D" id="1.20.58.1210">
    <property type="entry name" value="Exo84p, N-terminal helical domain"/>
    <property type="match status" value="1"/>
</dbReference>
<dbReference type="Gene3D" id="2.30.29.30">
    <property type="entry name" value="Pleckstrin-homology domain (PH domain)/Phosphotyrosine-binding domain (PTB)"/>
    <property type="match status" value="1"/>
</dbReference>
<dbReference type="InterPro" id="IPR016159">
    <property type="entry name" value="Cullin_repeat-like_dom_sf"/>
</dbReference>
<dbReference type="InterPro" id="IPR033961">
    <property type="entry name" value="Exo84"/>
</dbReference>
<dbReference type="InterPro" id="IPR032403">
    <property type="entry name" value="Exo84_C"/>
</dbReference>
<dbReference type="InterPro" id="IPR042561">
    <property type="entry name" value="Exo84_C_1"/>
</dbReference>
<dbReference type="InterPro" id="IPR042560">
    <property type="entry name" value="Exo84_C_2"/>
</dbReference>
<dbReference type="InterPro" id="IPR011993">
    <property type="entry name" value="PH-like_dom_sf"/>
</dbReference>
<dbReference type="PANTHER" id="PTHR21426">
    <property type="entry name" value="EXOCYST COMPLEX COMPONENT 8"/>
    <property type="match status" value="1"/>
</dbReference>
<dbReference type="PANTHER" id="PTHR21426:SF12">
    <property type="entry name" value="EXOCYST COMPLEX COMPONENT 8"/>
    <property type="match status" value="1"/>
</dbReference>
<dbReference type="Pfam" id="PF16528">
    <property type="entry name" value="Exo84_C"/>
    <property type="match status" value="1"/>
</dbReference>
<dbReference type="Pfam" id="PF25345">
    <property type="entry name" value="PH_EXO84"/>
    <property type="match status" value="1"/>
</dbReference>
<dbReference type="Pfam" id="PF08700">
    <property type="entry name" value="VPS51_Exo84_N"/>
    <property type="match status" value="1"/>
</dbReference>
<dbReference type="SUPFAM" id="SSF74788">
    <property type="entry name" value="Cullin repeat-like"/>
    <property type="match status" value="1"/>
</dbReference>
<accession>Q7S8B6</accession>
<gene>
    <name type="primary">exo84</name>
    <name type="ORF">NCU06631</name>
</gene>
<protein>
    <recommendedName>
        <fullName>Exocyst complex component exo84</fullName>
    </recommendedName>
</protein>
<name>EXO84_NEUCR</name>
<keyword id="KW-0175">Coiled coil</keyword>
<keyword id="KW-0968">Cytoplasmic vesicle</keyword>
<keyword id="KW-0268">Exocytosis</keyword>
<keyword id="KW-0653">Protein transport</keyword>
<keyword id="KW-1185">Reference proteome</keyword>
<keyword id="KW-0813">Transport</keyword>